<dbReference type="EMBL" id="AF130366">
    <property type="protein sequence ID" value="AAD22101.1"/>
    <property type="molecule type" value="mRNA"/>
</dbReference>
<dbReference type="EMBL" id="AK075426">
    <property type="protein sequence ID" value="BAC11614.1"/>
    <property type="molecule type" value="mRNA"/>
</dbReference>
<dbReference type="EMBL" id="AK126834">
    <property type="protein sequence ID" value="BAC86714.1"/>
    <property type="molecule type" value="mRNA"/>
</dbReference>
<dbReference type="EMBL" id="AK296618">
    <property type="protein sequence ID" value="BAG59226.1"/>
    <property type="molecule type" value="mRNA"/>
</dbReference>
<dbReference type="EMBL" id="AC002128">
    <property type="protein sequence ID" value="AAB58317.1"/>
    <property type="status" value="ALT_SEQ"/>
    <property type="molecule type" value="Genomic_DNA"/>
</dbReference>
<dbReference type="EMBL" id="AD000684">
    <property type="protein sequence ID" value="AAB51178.1"/>
    <property type="status" value="ALT_SEQ"/>
    <property type="molecule type" value="Genomic_DNA"/>
</dbReference>
<dbReference type="EMBL" id="BC004381">
    <property type="protein sequence ID" value="AAH04381.2"/>
    <property type="status" value="ALT_INIT"/>
    <property type="molecule type" value="mRNA"/>
</dbReference>
<dbReference type="EMBL" id="BC047376">
    <property type="protein sequence ID" value="AAH47376.2"/>
    <property type="molecule type" value="mRNA"/>
</dbReference>
<dbReference type="CCDS" id="CCDS92587.1">
    <molecule id="Q86X29-6"/>
</dbReference>
<dbReference type="RefSeq" id="NP_001247418.1">
    <property type="nucleotide sequence ID" value="NM_001260489.1"/>
</dbReference>
<dbReference type="RefSeq" id="NP_001247419.2">
    <molecule id="Q86X29-6"/>
    <property type="nucleotide sequence ID" value="NM_001260490.2"/>
</dbReference>
<dbReference type="RefSeq" id="NP_057009.3">
    <property type="nucleotide sequence ID" value="NM_015925.6"/>
</dbReference>
<dbReference type="RefSeq" id="NP_991403.1">
    <property type="nucleotide sequence ID" value="NM_205834.3"/>
</dbReference>
<dbReference type="RefSeq" id="NP_991404.1">
    <property type="nucleotide sequence ID" value="NM_205835.3"/>
</dbReference>
<dbReference type="BioGRID" id="119629">
    <property type="interactions" value="189"/>
</dbReference>
<dbReference type="FunCoup" id="Q86X29">
    <property type="interactions" value="824"/>
</dbReference>
<dbReference type="IntAct" id="Q86X29">
    <property type="interactions" value="94"/>
</dbReference>
<dbReference type="MINT" id="Q86X29"/>
<dbReference type="STRING" id="9606.ENSP00000480821"/>
<dbReference type="GlyCosmos" id="Q86X29">
    <property type="glycosylation" value="3 sites, 1 glycan"/>
</dbReference>
<dbReference type="GlyGen" id="Q86X29">
    <property type="glycosylation" value="44 sites, 3 O-linked glycans (41 sites)"/>
</dbReference>
<dbReference type="iPTMnet" id="Q86X29"/>
<dbReference type="PhosphoSitePlus" id="Q86X29"/>
<dbReference type="SwissPalm" id="Q86X29"/>
<dbReference type="BioMuta" id="LSR"/>
<dbReference type="DMDM" id="116242622"/>
<dbReference type="jPOST" id="Q86X29"/>
<dbReference type="MassIVE" id="Q86X29"/>
<dbReference type="PaxDb" id="9606-ENSP00000480821"/>
<dbReference type="PeptideAtlas" id="Q86X29"/>
<dbReference type="ProteomicsDB" id="20511"/>
<dbReference type="ProteomicsDB" id="4469"/>
<dbReference type="ProteomicsDB" id="70230">
    <molecule id="Q86X29-1"/>
</dbReference>
<dbReference type="ProteomicsDB" id="70231">
    <molecule id="Q86X29-2"/>
</dbReference>
<dbReference type="ProteomicsDB" id="70232">
    <molecule id="Q86X29-3"/>
</dbReference>
<dbReference type="Pumba" id="Q86X29"/>
<dbReference type="Antibodypedia" id="1523">
    <property type="antibodies" value="222 antibodies from 31 providers"/>
</dbReference>
<dbReference type="DNASU" id="51599"/>
<dbReference type="Ensembl" id="ENST00000347609.8">
    <molecule id="Q86X29-2"/>
    <property type="protein sequence ID" value="ENSP00000262627.3"/>
    <property type="gene ID" value="ENSG00000105699.17"/>
</dbReference>
<dbReference type="Ensembl" id="ENST00000427250.5">
    <molecule id="Q86X29-6"/>
    <property type="protein sequence ID" value="ENSP00000394479.1"/>
    <property type="gene ID" value="ENSG00000105699.17"/>
</dbReference>
<dbReference type="Ensembl" id="ENST00000621372.4">
    <molecule id="Q86X29-1"/>
    <property type="protein sequence ID" value="ENSP00000480821.1"/>
    <property type="gene ID" value="ENSG00000105699.17"/>
</dbReference>
<dbReference type="GeneID" id="51599"/>
<dbReference type="KEGG" id="hsa:51599"/>
<dbReference type="UCSC" id="uc002nyl.4">
    <molecule id="Q86X29-1"/>
    <property type="organism name" value="human"/>
</dbReference>
<dbReference type="AGR" id="HGNC:29572"/>
<dbReference type="CTD" id="51599"/>
<dbReference type="DisGeNET" id="51599"/>
<dbReference type="GeneCards" id="LSR"/>
<dbReference type="HGNC" id="HGNC:29572">
    <property type="gene designation" value="LSR"/>
</dbReference>
<dbReference type="HPA" id="ENSG00000105699">
    <property type="expression patterns" value="Tissue enhanced (liver)"/>
</dbReference>
<dbReference type="MalaCards" id="LSR"/>
<dbReference type="MIM" id="616582">
    <property type="type" value="gene"/>
</dbReference>
<dbReference type="neXtProt" id="NX_Q86X29"/>
<dbReference type="OpenTargets" id="ENSG00000105699"/>
<dbReference type="PharmGKB" id="PA142671504"/>
<dbReference type="VEuPathDB" id="HostDB:ENSG00000105699"/>
<dbReference type="eggNOG" id="ENOG502QWP5">
    <property type="taxonomic scope" value="Eukaryota"/>
</dbReference>
<dbReference type="GeneTree" id="ENSGT00950000183058"/>
<dbReference type="HOGENOM" id="CLU_028969_2_0_1"/>
<dbReference type="InParanoid" id="Q86X29"/>
<dbReference type="OMA" id="DWLFVVM"/>
<dbReference type="OrthoDB" id="9450321at2759"/>
<dbReference type="PAN-GO" id="Q86X29">
    <property type="GO annotations" value="4 GO annotations based on evolutionary models"/>
</dbReference>
<dbReference type="PhylomeDB" id="Q86X29"/>
<dbReference type="TreeFam" id="TF330877"/>
<dbReference type="PathwayCommons" id="Q86X29"/>
<dbReference type="Reactome" id="R-HSA-8964038">
    <property type="pathway name" value="LDL clearance"/>
</dbReference>
<dbReference type="Reactome" id="R-HSA-8964046">
    <property type="pathway name" value="VLDL clearance"/>
</dbReference>
<dbReference type="SignaLink" id="Q86X29"/>
<dbReference type="BioGRID-ORCS" id="51599">
    <property type="hits" value="20 hits in 1156 CRISPR screens"/>
</dbReference>
<dbReference type="ChiTaRS" id="LSR">
    <property type="organism name" value="human"/>
</dbReference>
<dbReference type="GeneWiki" id="LSR_(gene)"/>
<dbReference type="GenomeRNAi" id="51599"/>
<dbReference type="Pharos" id="Q86X29">
    <property type="development level" value="Tbio"/>
</dbReference>
<dbReference type="PRO" id="PR:Q86X29"/>
<dbReference type="Proteomes" id="UP000005640">
    <property type="component" value="Chromosome 19"/>
</dbReference>
<dbReference type="RNAct" id="Q86X29">
    <property type="molecule type" value="protein"/>
</dbReference>
<dbReference type="Bgee" id="ENSG00000105699">
    <property type="expression patterns" value="Expressed in mucosa of transverse colon and 149 other cell types or tissues"/>
</dbReference>
<dbReference type="ExpressionAtlas" id="Q86X29">
    <property type="expression patterns" value="baseline and differential"/>
</dbReference>
<dbReference type="GO" id="GO:0005923">
    <property type="term" value="C:bicellular tight junction"/>
    <property type="evidence" value="ECO:0007669"/>
    <property type="project" value="UniProtKB-SubCell"/>
</dbReference>
<dbReference type="GO" id="GO:0030054">
    <property type="term" value="C:cell junction"/>
    <property type="evidence" value="ECO:0000314"/>
    <property type="project" value="HPA"/>
</dbReference>
<dbReference type="GO" id="GO:0042627">
    <property type="term" value="C:chylomicron"/>
    <property type="evidence" value="ECO:0007669"/>
    <property type="project" value="UniProtKB-KW"/>
</dbReference>
<dbReference type="GO" id="GO:0070062">
    <property type="term" value="C:extracellular exosome"/>
    <property type="evidence" value="ECO:0007005"/>
    <property type="project" value="UniProtKB"/>
</dbReference>
<dbReference type="GO" id="GO:0034362">
    <property type="term" value="C:low-density lipoprotein particle"/>
    <property type="evidence" value="ECO:0007669"/>
    <property type="project" value="UniProtKB-KW"/>
</dbReference>
<dbReference type="GO" id="GO:0005886">
    <property type="term" value="C:plasma membrane"/>
    <property type="evidence" value="ECO:0000314"/>
    <property type="project" value="HPA"/>
</dbReference>
<dbReference type="GO" id="GO:0070160">
    <property type="term" value="C:tight junction"/>
    <property type="evidence" value="ECO:0000314"/>
    <property type="project" value="UniProtKB"/>
</dbReference>
<dbReference type="GO" id="GO:0061689">
    <property type="term" value="C:tricellular tight junction"/>
    <property type="evidence" value="ECO:0000250"/>
    <property type="project" value="ARUK-UCL"/>
</dbReference>
<dbReference type="GO" id="GO:0034361">
    <property type="term" value="C:very-low-density lipoprotein particle"/>
    <property type="evidence" value="ECO:0007669"/>
    <property type="project" value="UniProtKB-KW"/>
</dbReference>
<dbReference type="GO" id="GO:0010669">
    <property type="term" value="P:epithelial structure maintenance"/>
    <property type="evidence" value="ECO:0000250"/>
    <property type="project" value="UniProtKB"/>
</dbReference>
<dbReference type="GO" id="GO:0060856">
    <property type="term" value="P:establishment of blood-brain barrier"/>
    <property type="evidence" value="ECO:0000250"/>
    <property type="project" value="ARUK-UCL"/>
</dbReference>
<dbReference type="GO" id="GO:0061436">
    <property type="term" value="P:establishment of skin barrier"/>
    <property type="evidence" value="ECO:0000250"/>
    <property type="project" value="ARUK-UCL"/>
</dbReference>
<dbReference type="GO" id="GO:0001889">
    <property type="term" value="P:liver development"/>
    <property type="evidence" value="ECO:0000250"/>
    <property type="project" value="HGNC"/>
</dbReference>
<dbReference type="GO" id="GO:0035633">
    <property type="term" value="P:maintenance of blood-brain barrier"/>
    <property type="evidence" value="ECO:0000303"/>
    <property type="project" value="ARUK-UCL"/>
</dbReference>
<dbReference type="GO" id="GO:0061833">
    <property type="term" value="P:protein localization to tricellular tight junction"/>
    <property type="evidence" value="ECO:0000250"/>
    <property type="project" value="ARUK-UCL"/>
</dbReference>
<dbReference type="GO" id="GO:1904274">
    <property type="term" value="P:tricellular tight junction assembly"/>
    <property type="evidence" value="ECO:0000250"/>
    <property type="project" value="ARUK-UCL"/>
</dbReference>
<dbReference type="Gene3D" id="2.60.40.10">
    <property type="entry name" value="Immunoglobulins"/>
    <property type="match status" value="1"/>
</dbReference>
<dbReference type="InterPro" id="IPR007110">
    <property type="entry name" value="Ig-like_dom"/>
</dbReference>
<dbReference type="InterPro" id="IPR036179">
    <property type="entry name" value="Ig-like_dom_sf"/>
</dbReference>
<dbReference type="InterPro" id="IPR051874">
    <property type="entry name" value="Ig-like_domain-LISCH7"/>
</dbReference>
<dbReference type="InterPro" id="IPR013783">
    <property type="entry name" value="Ig-like_fold"/>
</dbReference>
<dbReference type="InterPro" id="IPR003599">
    <property type="entry name" value="Ig_sub"/>
</dbReference>
<dbReference type="InterPro" id="IPR008664">
    <property type="entry name" value="LISCH7"/>
</dbReference>
<dbReference type="PANTHER" id="PTHR15923:SF1">
    <property type="entry name" value="LIPOLYSIS-STIMULATED LIPOPROTEIN RECEPTOR"/>
    <property type="match status" value="1"/>
</dbReference>
<dbReference type="PANTHER" id="PTHR15923">
    <property type="entry name" value="TRANSMEMBRANE AND IMMUNOGLOBULIN DOMAIN-CONTAINING PROTEIN"/>
    <property type="match status" value="1"/>
</dbReference>
<dbReference type="Pfam" id="PF05624">
    <property type="entry name" value="LSR"/>
    <property type="match status" value="1"/>
</dbReference>
<dbReference type="SMART" id="SM00409">
    <property type="entry name" value="IG"/>
    <property type="match status" value="1"/>
</dbReference>
<dbReference type="SUPFAM" id="SSF48726">
    <property type="entry name" value="Immunoglobulin"/>
    <property type="match status" value="1"/>
</dbReference>
<dbReference type="PROSITE" id="PS50835">
    <property type="entry name" value="IG_LIKE"/>
    <property type="match status" value="1"/>
</dbReference>
<sequence>MQQDGLGVGTRNGSGKGRSVHPSWPWCAPRPLRYFGRDARARRAQTAAMALLAGGLSRGLGSHPAAAGRDAVVFVWLLLSTWCTAPARAIQVTVSNPYHVVILFQPVTLPCTYQMTSTPTQPIVIWKYKSFCRDRIADAFSPASVDNQLNAQLAAGNPGYNPYVECQDSVRTVRVVATKQGNAVTLGDYYQGRRITITGNADLTFDQTAWGDSGVYYCSVVSAQDLQGNNEAYAELIVLGRTSGVAELLPGFQAGPIEDWLFVVVVCLAAFLIFLLLGICWCQCCPHTCCCYVRCPCCPDKCCCPEALYAAGKAATSGVPSIYAPSTYAHLSPAKTPPPPAMIPMGPAYNGYPGGYPGDVDRSSSAGGQGSYVPLLRDTDSSVASEVRSGYRIQASQQDDSMRVLYYMEKELANFDPSRPGPPSGRVERAMSEVTSLHEDDWRSRPSRGPALTPIRDEEWGGHSPRSPRGWDQEPAREQAGGGWRARRPRARSVDALDDLTPPSTAESGSRSPTSNGGRSRAYMPPRSRSRDDLYDQDDSRDFPRSRDPHYDDFRSRERPPADPRSHHHRTRDPRDNGSRSGDLPYDGRLLEEAVRKKGSEERRRPHKEEEEEAYYPPAPPPYSETDSQASRERRLKKNLALSRESLVV</sequence>
<keyword id="KW-0025">Alternative splicing</keyword>
<keyword id="KW-0965">Cell junction</keyword>
<keyword id="KW-1003">Cell membrane</keyword>
<keyword id="KW-0162">Chylomicron</keyword>
<keyword id="KW-1015">Disulfide bond</keyword>
<keyword id="KW-0393">Immunoglobulin domain</keyword>
<keyword id="KW-1017">Isopeptide bond</keyword>
<keyword id="KW-0427">LDL</keyword>
<keyword id="KW-0472">Membrane</keyword>
<keyword id="KW-0597">Phosphoprotein</keyword>
<keyword id="KW-1267">Proteomics identification</keyword>
<keyword id="KW-0675">Receptor</keyword>
<keyword id="KW-1185">Reference proteome</keyword>
<keyword id="KW-0796">Tight junction</keyword>
<keyword id="KW-0812">Transmembrane</keyword>
<keyword id="KW-1133">Transmembrane helix</keyword>
<keyword id="KW-0832">Ubl conjugation</keyword>
<keyword id="KW-0850">VLDL</keyword>
<protein>
    <recommendedName>
        <fullName evidence="17">Lipolysis-stimulated lipoprotein receptor</fullName>
    </recommendedName>
    <alternativeName>
        <fullName evidence="15">Angulin-1</fullName>
    </alternativeName>
</protein>
<reference key="1">
    <citation type="submission" date="1999-02" db="EMBL/GenBank/DDBJ databases">
        <title>Cloning and functional analysis of LISCH.</title>
        <authorList>
            <person name="Teramoto T."/>
            <person name="Thorgeirsson S.S."/>
        </authorList>
    </citation>
    <scope>NUCLEOTIDE SEQUENCE [MRNA] (ISOFORM 2)</scope>
</reference>
<reference key="2">
    <citation type="journal article" date="2004" name="Nat. Genet.">
        <title>Complete sequencing and characterization of 21,243 full-length human cDNAs.</title>
        <authorList>
            <person name="Ota T."/>
            <person name="Suzuki Y."/>
            <person name="Nishikawa T."/>
            <person name="Otsuki T."/>
            <person name="Sugiyama T."/>
            <person name="Irie R."/>
            <person name="Wakamatsu A."/>
            <person name="Hayashi K."/>
            <person name="Sato H."/>
            <person name="Nagai K."/>
            <person name="Kimura K."/>
            <person name="Makita H."/>
            <person name="Sekine M."/>
            <person name="Obayashi M."/>
            <person name="Nishi T."/>
            <person name="Shibahara T."/>
            <person name="Tanaka T."/>
            <person name="Ishii S."/>
            <person name="Yamamoto J."/>
            <person name="Saito K."/>
            <person name="Kawai Y."/>
            <person name="Isono Y."/>
            <person name="Nakamura Y."/>
            <person name="Nagahari K."/>
            <person name="Murakami K."/>
            <person name="Yasuda T."/>
            <person name="Iwayanagi T."/>
            <person name="Wagatsuma M."/>
            <person name="Shiratori A."/>
            <person name="Sudo H."/>
            <person name="Hosoiri T."/>
            <person name="Kaku Y."/>
            <person name="Kodaira H."/>
            <person name="Kondo H."/>
            <person name="Sugawara M."/>
            <person name="Takahashi M."/>
            <person name="Kanda K."/>
            <person name="Yokoi T."/>
            <person name="Furuya T."/>
            <person name="Kikkawa E."/>
            <person name="Omura Y."/>
            <person name="Abe K."/>
            <person name="Kamihara K."/>
            <person name="Katsuta N."/>
            <person name="Sato K."/>
            <person name="Tanikawa M."/>
            <person name="Yamazaki M."/>
            <person name="Ninomiya K."/>
            <person name="Ishibashi T."/>
            <person name="Yamashita H."/>
            <person name="Murakawa K."/>
            <person name="Fujimori K."/>
            <person name="Tanai H."/>
            <person name="Kimata M."/>
            <person name="Watanabe M."/>
            <person name="Hiraoka S."/>
            <person name="Chiba Y."/>
            <person name="Ishida S."/>
            <person name="Ono Y."/>
            <person name="Takiguchi S."/>
            <person name="Watanabe S."/>
            <person name="Yosida M."/>
            <person name="Hotuta T."/>
            <person name="Kusano J."/>
            <person name="Kanehori K."/>
            <person name="Takahashi-Fujii A."/>
            <person name="Hara H."/>
            <person name="Tanase T.-O."/>
            <person name="Nomura Y."/>
            <person name="Togiya S."/>
            <person name="Komai F."/>
            <person name="Hara R."/>
            <person name="Takeuchi K."/>
            <person name="Arita M."/>
            <person name="Imose N."/>
            <person name="Musashino K."/>
            <person name="Yuuki H."/>
            <person name="Oshima A."/>
            <person name="Sasaki N."/>
            <person name="Aotsuka S."/>
            <person name="Yoshikawa Y."/>
            <person name="Matsunawa H."/>
            <person name="Ichihara T."/>
            <person name="Shiohata N."/>
            <person name="Sano S."/>
            <person name="Moriya S."/>
            <person name="Momiyama H."/>
            <person name="Satoh N."/>
            <person name="Takami S."/>
            <person name="Terashima Y."/>
            <person name="Suzuki O."/>
            <person name="Nakagawa S."/>
            <person name="Senoh A."/>
            <person name="Mizoguchi H."/>
            <person name="Goto Y."/>
            <person name="Shimizu F."/>
            <person name="Wakebe H."/>
            <person name="Hishigaki H."/>
            <person name="Watanabe T."/>
            <person name="Sugiyama A."/>
            <person name="Takemoto M."/>
            <person name="Kawakami B."/>
            <person name="Yamazaki M."/>
            <person name="Watanabe K."/>
            <person name="Kumagai A."/>
            <person name="Itakura S."/>
            <person name="Fukuzumi Y."/>
            <person name="Fujimori Y."/>
            <person name="Komiyama M."/>
            <person name="Tashiro H."/>
            <person name="Tanigami A."/>
            <person name="Fujiwara T."/>
            <person name="Ono T."/>
            <person name="Yamada K."/>
            <person name="Fujii Y."/>
            <person name="Ozaki K."/>
            <person name="Hirao M."/>
            <person name="Ohmori Y."/>
            <person name="Kawabata A."/>
            <person name="Hikiji T."/>
            <person name="Kobatake N."/>
            <person name="Inagaki H."/>
            <person name="Ikema Y."/>
            <person name="Okamoto S."/>
            <person name="Okitani R."/>
            <person name="Kawakami T."/>
            <person name="Noguchi S."/>
            <person name="Itoh T."/>
            <person name="Shigeta K."/>
            <person name="Senba T."/>
            <person name="Matsumura K."/>
            <person name="Nakajima Y."/>
            <person name="Mizuno T."/>
            <person name="Morinaga M."/>
            <person name="Sasaki M."/>
            <person name="Togashi T."/>
            <person name="Oyama M."/>
            <person name="Hata H."/>
            <person name="Watanabe M."/>
            <person name="Komatsu T."/>
            <person name="Mizushima-Sugano J."/>
            <person name="Satoh T."/>
            <person name="Shirai Y."/>
            <person name="Takahashi Y."/>
            <person name="Nakagawa K."/>
            <person name="Okumura K."/>
            <person name="Nagase T."/>
            <person name="Nomura N."/>
            <person name="Kikuchi H."/>
            <person name="Masuho Y."/>
            <person name="Yamashita R."/>
            <person name="Nakai K."/>
            <person name="Yada T."/>
            <person name="Nakamura Y."/>
            <person name="Ohara O."/>
            <person name="Isogai T."/>
            <person name="Sugano S."/>
        </authorList>
    </citation>
    <scope>NUCLEOTIDE SEQUENCE [LARGE SCALE MRNA] (ISOFORMS 3 AND 6)</scope>
    <scope>VARIANT ASN-363</scope>
    <source>
        <tissue>Amygdala</tissue>
        <tissue>Colon</tissue>
    </source>
</reference>
<reference key="3">
    <citation type="journal article" date="2005" name="DNA Res.">
        <title>Signal sequence and keyword trap in silico for selection of full-length human cDNAs encoding secretion or membrane proteins from oligo-capped cDNA libraries.</title>
        <authorList>
            <person name="Otsuki T."/>
            <person name="Ota T."/>
            <person name="Nishikawa T."/>
            <person name="Hayashi K."/>
            <person name="Suzuki Y."/>
            <person name="Yamamoto J."/>
            <person name="Wakamatsu A."/>
            <person name="Kimura K."/>
            <person name="Sakamoto K."/>
            <person name="Hatano N."/>
            <person name="Kawai Y."/>
            <person name="Ishii S."/>
            <person name="Saito K."/>
            <person name="Kojima S."/>
            <person name="Sugiyama T."/>
            <person name="Ono T."/>
            <person name="Okano K."/>
            <person name="Yoshikawa Y."/>
            <person name="Aotsuka S."/>
            <person name="Sasaki N."/>
            <person name="Hattori A."/>
            <person name="Okumura K."/>
            <person name="Nagai K."/>
            <person name="Sugano S."/>
            <person name="Isogai T."/>
        </authorList>
    </citation>
    <scope>NUCLEOTIDE SEQUENCE [LARGE SCALE MRNA] (ISOFORM 4)</scope>
    <scope>VARIANT ASN-363</scope>
    <source>
        <tissue>Placenta</tissue>
    </source>
</reference>
<reference key="4">
    <citation type="journal article" date="2004" name="Nature">
        <title>The DNA sequence and biology of human chromosome 19.</title>
        <authorList>
            <person name="Grimwood J."/>
            <person name="Gordon L.A."/>
            <person name="Olsen A.S."/>
            <person name="Terry A."/>
            <person name="Schmutz J."/>
            <person name="Lamerdin J.E."/>
            <person name="Hellsten U."/>
            <person name="Goodstein D."/>
            <person name="Couronne O."/>
            <person name="Tran-Gyamfi M."/>
            <person name="Aerts A."/>
            <person name="Altherr M."/>
            <person name="Ashworth L."/>
            <person name="Bajorek E."/>
            <person name="Black S."/>
            <person name="Branscomb E."/>
            <person name="Caenepeel S."/>
            <person name="Carrano A.V."/>
            <person name="Caoile C."/>
            <person name="Chan Y.M."/>
            <person name="Christensen M."/>
            <person name="Cleland C.A."/>
            <person name="Copeland A."/>
            <person name="Dalin E."/>
            <person name="Dehal P."/>
            <person name="Denys M."/>
            <person name="Detter J.C."/>
            <person name="Escobar J."/>
            <person name="Flowers D."/>
            <person name="Fotopulos D."/>
            <person name="Garcia C."/>
            <person name="Georgescu A.M."/>
            <person name="Glavina T."/>
            <person name="Gomez M."/>
            <person name="Gonzales E."/>
            <person name="Groza M."/>
            <person name="Hammon N."/>
            <person name="Hawkins T."/>
            <person name="Haydu L."/>
            <person name="Ho I."/>
            <person name="Huang W."/>
            <person name="Israni S."/>
            <person name="Jett J."/>
            <person name="Kadner K."/>
            <person name="Kimball H."/>
            <person name="Kobayashi A."/>
            <person name="Larionov V."/>
            <person name="Leem S.-H."/>
            <person name="Lopez F."/>
            <person name="Lou Y."/>
            <person name="Lowry S."/>
            <person name="Malfatti S."/>
            <person name="Martinez D."/>
            <person name="McCready P.M."/>
            <person name="Medina C."/>
            <person name="Morgan J."/>
            <person name="Nelson K."/>
            <person name="Nolan M."/>
            <person name="Ovcharenko I."/>
            <person name="Pitluck S."/>
            <person name="Pollard M."/>
            <person name="Popkie A.P."/>
            <person name="Predki P."/>
            <person name="Quan G."/>
            <person name="Ramirez L."/>
            <person name="Rash S."/>
            <person name="Retterer J."/>
            <person name="Rodriguez A."/>
            <person name="Rogers S."/>
            <person name="Salamov A."/>
            <person name="Salazar A."/>
            <person name="She X."/>
            <person name="Smith D."/>
            <person name="Slezak T."/>
            <person name="Solovyev V."/>
            <person name="Thayer N."/>
            <person name="Tice H."/>
            <person name="Tsai M."/>
            <person name="Ustaszewska A."/>
            <person name="Vo N."/>
            <person name="Wagner M."/>
            <person name="Wheeler J."/>
            <person name="Wu K."/>
            <person name="Xie G."/>
            <person name="Yang J."/>
            <person name="Dubchak I."/>
            <person name="Furey T.S."/>
            <person name="DeJong P."/>
            <person name="Dickson M."/>
            <person name="Gordon D."/>
            <person name="Eichler E.E."/>
            <person name="Pennacchio L.A."/>
            <person name="Richardson P."/>
            <person name="Stubbs L."/>
            <person name="Rokhsar D.S."/>
            <person name="Myers R.M."/>
            <person name="Rubin E.M."/>
            <person name="Lucas S.M."/>
        </authorList>
    </citation>
    <scope>NUCLEOTIDE SEQUENCE [LARGE SCALE GENOMIC DNA]</scope>
</reference>
<reference key="5">
    <citation type="journal article" date="2004" name="Genome Res.">
        <title>The status, quality, and expansion of the NIH full-length cDNA project: the Mammalian Gene Collection (MGC).</title>
        <authorList>
            <consortium name="The MGC Project Team"/>
        </authorList>
    </citation>
    <scope>NUCLEOTIDE SEQUENCE [LARGE SCALE MRNA] (ISOFORMS 1 AND 4)</scope>
    <source>
        <tissue>Pancreas</tissue>
        <tissue>Testis</tissue>
    </source>
</reference>
<reference key="6">
    <citation type="journal article" date="2007" name="Mol. Cell. Proteomics">
        <title>Quantitative phosphoproteome profiling of Wnt3a-mediated signaling network: indicating the involvement of ribonucleoside-diphosphate reductase M2 subunit phosphorylation at residue serine 20 in canonical Wnt signal transduction.</title>
        <authorList>
            <person name="Tang L.-Y."/>
            <person name="Deng N."/>
            <person name="Wang L.-S."/>
            <person name="Dai J."/>
            <person name="Wang Z.-L."/>
            <person name="Jiang X.-S."/>
            <person name="Li S.-J."/>
            <person name="Li L."/>
            <person name="Sheng Q.-H."/>
            <person name="Wu D.-Q."/>
            <person name="Li L."/>
            <person name="Zeng R."/>
        </authorList>
    </citation>
    <scope>PHOSPHORYLATION [LARGE SCALE ANALYSIS] AT SER-528 AND SER-530</scope>
    <scope>IDENTIFICATION BY MASS SPECTROMETRY [LARGE SCALE ANALYSIS]</scope>
    <source>
        <tissue>Embryonic kidney</tissue>
    </source>
</reference>
<reference key="7">
    <citation type="journal article" date="2008" name="J. Proteome Res.">
        <title>Combining protein-based IMAC, peptide-based IMAC, and MudPIT for efficient phosphoproteomic analysis.</title>
        <authorList>
            <person name="Cantin G.T."/>
            <person name="Yi W."/>
            <person name="Lu B."/>
            <person name="Park S.K."/>
            <person name="Xu T."/>
            <person name="Lee J.-D."/>
            <person name="Yates J.R. III"/>
        </authorList>
    </citation>
    <scope>PHOSPHORYLATION [LARGE SCALE ANALYSIS] AT SER-493</scope>
    <scope>IDENTIFICATION BY MASS SPECTROMETRY [LARGE SCALE ANALYSIS]</scope>
    <source>
        <tissue>Cervix carcinoma</tissue>
    </source>
</reference>
<reference key="8">
    <citation type="journal article" date="2008" name="Proc. Natl. Acad. Sci. U.S.A.">
        <title>A quantitative atlas of mitotic phosphorylation.</title>
        <authorList>
            <person name="Dephoure N."/>
            <person name="Zhou C."/>
            <person name="Villen J."/>
            <person name="Beausoleil S.A."/>
            <person name="Bakalarski C.E."/>
            <person name="Elledge S.J."/>
            <person name="Gygi S.P."/>
        </authorList>
    </citation>
    <scope>IDENTIFICATION BY MASS SPECTROMETRY [LARGE SCALE ANALYSIS]</scope>
    <source>
        <tissue>Cervix carcinoma</tissue>
    </source>
</reference>
<reference key="9">
    <citation type="journal article" date="2008" name="Proteomics">
        <title>Large-scale phosphoproteome analysis of human liver tissue by enrichment and fractionation of phosphopeptides with strong anion exchange chromatography.</title>
        <authorList>
            <person name="Han G."/>
            <person name="Ye M."/>
            <person name="Zhou H."/>
            <person name="Jiang X."/>
            <person name="Feng S."/>
            <person name="Jiang X."/>
            <person name="Tian R."/>
            <person name="Wan D."/>
            <person name="Zou H."/>
            <person name="Gu J."/>
        </authorList>
    </citation>
    <scope>PHOSPHORYLATION [LARGE SCALE ANALYSIS] AT SER-530</scope>
    <scope>IDENTIFICATION BY MASS SPECTROMETRY [LARGE SCALE ANALYSIS]</scope>
    <source>
        <tissue>Liver</tissue>
    </source>
</reference>
<reference key="10">
    <citation type="journal article" date="2009" name="Anal. Chem.">
        <title>Lys-N and trypsin cover complementary parts of the phosphoproteome in a refined SCX-based approach.</title>
        <authorList>
            <person name="Gauci S."/>
            <person name="Helbig A.O."/>
            <person name="Slijper M."/>
            <person name="Krijgsveld J."/>
            <person name="Heck A.J."/>
            <person name="Mohammed S."/>
        </authorList>
    </citation>
    <scope>IDENTIFICATION BY MASS SPECTROMETRY [LARGE SCALE ANALYSIS]</scope>
</reference>
<reference key="11">
    <citation type="journal article" date="2011" name="J. Cell Sci.">
        <title>LSR defines cell corners for tricellular tight junction formation in epithelial cells.</title>
        <authorList>
            <person name="Masuda S."/>
            <person name="Oda Y."/>
            <person name="Sasaki H."/>
            <person name="Ikenouchi J."/>
            <person name="Higashi T."/>
            <person name="Akashi M."/>
            <person name="Nishi E."/>
            <person name="Furuse M."/>
        </authorList>
    </citation>
    <scope>SUBCELLULAR LOCATION</scope>
</reference>
<reference key="12">
    <citation type="journal article" date="2011" name="Sci. Signal.">
        <title>System-wide temporal characterization of the proteome and phosphoproteome of human embryonic stem cell differentiation.</title>
        <authorList>
            <person name="Rigbolt K.T."/>
            <person name="Prokhorova T.A."/>
            <person name="Akimov V."/>
            <person name="Henningsen J."/>
            <person name="Johansen P.T."/>
            <person name="Kratchmarova I."/>
            <person name="Kassem M."/>
            <person name="Mann M."/>
            <person name="Olsen J.V."/>
            <person name="Blagoev B."/>
        </authorList>
    </citation>
    <scope>PHOSPHORYLATION [LARGE SCALE ANALYSIS] AT SER-530 AND SER-540</scope>
    <scope>IDENTIFICATION BY MASS SPECTROMETRY [LARGE SCALE ANALYSIS]</scope>
</reference>
<reference key="13">
    <citation type="journal article" date="2013" name="J. Proteome Res.">
        <title>Toward a comprehensive characterization of a human cancer cell phosphoproteome.</title>
        <authorList>
            <person name="Zhou H."/>
            <person name="Di Palma S."/>
            <person name="Preisinger C."/>
            <person name="Peng M."/>
            <person name="Polat A.N."/>
            <person name="Heck A.J."/>
            <person name="Mohammed S."/>
        </authorList>
    </citation>
    <scope>PHOSPHORYLATION [LARGE SCALE ANALYSIS] AT SER-365; SER-371; SER-389; SER-432; SER-436; THR-453; SER-464; SER-467; SER-493; THR-501; SER-530; SER-579; SER-643 AND SER-646</scope>
    <scope>IDENTIFICATION BY MASS SPECTROMETRY [LARGE SCALE ANALYSIS]</scope>
    <source>
        <tissue>Cervix carcinoma</tissue>
        <tissue>Erythroleukemia</tissue>
    </source>
</reference>
<reference key="14">
    <citation type="journal article" date="2014" name="J. Proteomics">
        <title>An enzyme assisted RP-RPLC approach for in-depth analysis of human liver phosphoproteome.</title>
        <authorList>
            <person name="Bian Y."/>
            <person name="Song C."/>
            <person name="Cheng K."/>
            <person name="Dong M."/>
            <person name="Wang F."/>
            <person name="Huang J."/>
            <person name="Sun D."/>
            <person name="Wang L."/>
            <person name="Ye M."/>
            <person name="Zou H."/>
        </authorList>
    </citation>
    <scope>PHOSPHORYLATION [LARGE SCALE ANALYSIS] AT SER-464; SER-493; THR-501; SER-530; TYR-535; SER-631 AND SER-646</scope>
    <scope>IDENTIFICATION BY MASS SPECTROMETRY [LARGE SCALE ANALYSIS]</scope>
    <source>
        <tissue>Liver</tissue>
    </source>
</reference>
<reference key="15">
    <citation type="journal article" date="2013" name="J. Cell Sci.">
        <title>Analysis of the 'angulin' proteins LSR, ILDR1 and ILDR2--tricellulin recruitment, epithelial barrier function and implication in deafness pathogenesis.</title>
        <authorList>
            <person name="Higashi T."/>
            <person name="Tokuda S."/>
            <person name="Kitajiri S."/>
            <person name="Masuda S."/>
            <person name="Nakamura H."/>
            <person name="Oda Y."/>
            <person name="Furuse M."/>
        </authorList>
    </citation>
    <scope>SUBCELLULAR LOCATION</scope>
</reference>
<reference key="16">
    <citation type="journal article" date="2024" name="Nat. Chem. Biol.">
        <title>Discovery and mechanism of K63-linkage-directed deubiquitinase activity in USP53.</title>
        <authorList>
            <person name="Wendrich K."/>
            <person name="Gallant K."/>
            <person name="Recknagel S."/>
            <person name="Petroulia S."/>
            <person name="Kazi N.H."/>
            <person name="Hane J.A."/>
            <person name="Fuehrer S."/>
            <person name="Bezstarosti K."/>
            <person name="O'Dea R."/>
            <person name="Demmers J."/>
            <person name="Gersch M."/>
        </authorList>
    </citation>
    <scope>UBIQUITINATION AT LYS-638</scope>
    <scope>DEUBIQUITINATION BY USP53</scope>
</reference>
<reference key="17">
    <citation type="journal article" date="2019" name="Genet. Med.">
        <title>Identification of novel loci for pediatric cholestatic liver disease defined by KIF12, PPM1F, USP53, LSR, and WDR83OS pathogenic variants.</title>
        <authorList>
            <person name="Maddirevula S."/>
            <person name="Alhebbi H."/>
            <person name="Alqahtani A."/>
            <person name="Algoufi T."/>
            <person name="Alsaif H.S."/>
            <person name="Ibrahim N."/>
            <person name="Abdulwahab F."/>
            <person name="Barr M."/>
            <person name="Alzaidan H."/>
            <person name="Almehaideb A."/>
            <person name="AlSasi O."/>
            <person name="Alhashem A."/>
            <person name="Hussaini H.A."/>
            <person name="Wali S."/>
            <person name="Alkuraya F.S."/>
        </authorList>
    </citation>
    <scope>VARIANT GLY-235</scope>
</reference>
<gene>
    <name evidence="18" type="primary">LSR</name>
    <name type="synonym">ILDR3</name>
    <name type="synonym">LISCH</name>
</gene>
<name>LSR_HUMAN</name>
<organism>
    <name type="scientific">Homo sapiens</name>
    <name type="common">Human</name>
    <dbReference type="NCBI Taxonomy" id="9606"/>
    <lineage>
        <taxon>Eukaryota</taxon>
        <taxon>Metazoa</taxon>
        <taxon>Chordata</taxon>
        <taxon>Craniata</taxon>
        <taxon>Vertebrata</taxon>
        <taxon>Euteleostomi</taxon>
        <taxon>Mammalia</taxon>
        <taxon>Eutheria</taxon>
        <taxon>Euarchontoglires</taxon>
        <taxon>Primates</taxon>
        <taxon>Haplorrhini</taxon>
        <taxon>Catarrhini</taxon>
        <taxon>Hominidae</taxon>
        <taxon>Homo</taxon>
    </lineage>
</organism>
<feature type="chain" id="PRO_0000245308" description="Lipolysis-stimulated lipoprotein receptor">
    <location>
        <begin position="1"/>
        <end position="649"/>
    </location>
</feature>
<feature type="topological domain" description="Extracellular" evidence="3">
    <location>
        <begin position="1"/>
        <end position="259"/>
    </location>
</feature>
<feature type="transmembrane region" description="Helical" evidence="3">
    <location>
        <begin position="260"/>
        <end position="280"/>
    </location>
</feature>
<feature type="topological domain" description="Cytoplasmic" evidence="3">
    <location>
        <begin position="281"/>
        <end position="649"/>
    </location>
</feature>
<feature type="domain" description="Ig-like V-type" evidence="4">
    <location>
        <begin position="86"/>
        <end position="234"/>
    </location>
</feature>
<feature type="region of interest" description="Disordered" evidence="5">
    <location>
        <begin position="1"/>
        <end position="21"/>
    </location>
</feature>
<feature type="region of interest" description="Disordered" evidence="5">
    <location>
        <begin position="414"/>
        <end position="649"/>
    </location>
</feature>
<feature type="compositionally biased region" description="Gly residues" evidence="5">
    <location>
        <begin position="1"/>
        <end position="16"/>
    </location>
</feature>
<feature type="compositionally biased region" description="Basic and acidic residues" evidence="5">
    <location>
        <begin position="426"/>
        <end position="444"/>
    </location>
</feature>
<feature type="compositionally biased region" description="Polar residues" evidence="5">
    <location>
        <begin position="502"/>
        <end position="518"/>
    </location>
</feature>
<feature type="compositionally biased region" description="Basic and acidic residues" evidence="5">
    <location>
        <begin position="529"/>
        <end position="565"/>
    </location>
</feature>
<feature type="compositionally biased region" description="Basic and acidic residues" evidence="5">
    <location>
        <begin position="589"/>
        <end position="609"/>
    </location>
</feature>
<feature type="modified residue" description="Phosphothreonine" evidence="2">
    <location>
        <position position="336"/>
    </location>
</feature>
<feature type="modified residue" description="Phosphoserine" evidence="23">
    <location>
        <position position="365"/>
    </location>
</feature>
<feature type="modified residue" description="Phosphoserine" evidence="23">
    <location>
        <position position="371"/>
    </location>
</feature>
<feature type="modified residue" description="Phosphoserine" evidence="23">
    <location>
        <position position="389"/>
    </location>
</feature>
<feature type="modified residue" description="Phosphoserine" evidence="23">
    <location>
        <position position="432"/>
    </location>
</feature>
<feature type="modified residue" description="Phosphoserine" evidence="23">
    <location>
        <position position="436"/>
    </location>
</feature>
<feature type="modified residue" description="Phosphothreonine" evidence="23">
    <location>
        <position position="453"/>
    </location>
</feature>
<feature type="modified residue" description="Phosphoserine" evidence="23 24">
    <location>
        <position position="464"/>
    </location>
</feature>
<feature type="modified residue" description="Phosphoserine" evidence="23">
    <location>
        <position position="467"/>
    </location>
</feature>
<feature type="modified residue" description="Phosphoserine" evidence="20 23 24">
    <location>
        <position position="493"/>
    </location>
</feature>
<feature type="modified residue" description="Phosphothreonine" evidence="23 24">
    <location>
        <position position="501"/>
    </location>
</feature>
<feature type="modified residue" description="Phosphoserine" evidence="19">
    <location>
        <position position="528"/>
    </location>
</feature>
<feature type="modified residue" description="Phosphoserine" evidence="19 21 22 23 24">
    <location>
        <position position="530"/>
    </location>
</feature>
<feature type="modified residue" description="Phosphotyrosine" evidence="24">
    <location>
        <position position="535"/>
    </location>
</feature>
<feature type="modified residue" description="Phosphoserine" evidence="22">
    <location>
        <position position="540"/>
    </location>
</feature>
<feature type="modified residue" description="Phosphoserine" evidence="23">
    <location>
        <position position="579"/>
    </location>
</feature>
<feature type="modified residue" description="Phosphoserine" evidence="24">
    <location>
        <position position="631"/>
    </location>
</feature>
<feature type="modified residue" description="Phosphoserine" evidence="23">
    <location>
        <position position="643"/>
    </location>
</feature>
<feature type="modified residue" description="Phosphoserine" evidence="23 24">
    <location>
        <position position="646"/>
    </location>
</feature>
<feature type="disulfide bond" evidence="4">
    <location>
        <begin position="111"/>
        <end position="218"/>
    </location>
</feature>
<feature type="cross-link" description="Glycyl lysine isopeptide (Lys-Gly) (interchain with G-Cter in ubiquitin)" evidence="11">
    <location>
        <position position="638"/>
    </location>
</feature>
<feature type="splice variant" id="VSP_057210" description="In isoform 6." evidence="12">
    <location>
        <begin position="1"/>
        <end position="48"/>
    </location>
</feature>
<feature type="splice variant" id="VSP_019691" description="In isoform 2." evidence="16">
    <location>
        <begin position="52"/>
        <end position="88"/>
    </location>
</feature>
<feature type="splice variant" id="VSP_057211" description="In isoform 6." evidence="12">
    <original>NADLTFDQTAWGDSGVYYCSVVSAQDLQGNNEAYAELIVLGRTSGVAELLPGFQAGPIEDWLFVVVVCLAAFLIFLLLGICWCQCCPHTCCCYVRCPCCPDKCCCPEAL</original>
    <variation>M</variation>
    <location>
        <begin position="200"/>
        <end position="308"/>
    </location>
</feature>
<feature type="splice variant" id="VSP_046797" description="In isoform 5." evidence="17">
    <original>GRTSGVAELLPGFQAGPIEDWLFVVVVCLAAFLIFLLLGICWCQCCPHTCCCYVRCPCCPDKCCCPEAL</original>
    <variation>V</variation>
    <location>
        <begin position="240"/>
        <end position="308"/>
    </location>
</feature>
<feature type="splice variant" id="VSP_019692" description="In isoform 3 and isoform 4." evidence="12 13 14">
    <location>
        <begin position="240"/>
        <end position="258"/>
    </location>
</feature>
<feature type="splice variant" id="VSP_019693" description="In isoform 2." evidence="16">
    <location>
        <begin position="366"/>
        <end position="386"/>
    </location>
</feature>
<feature type="splice variant" id="VSP_019694" description="In isoform 3." evidence="12">
    <location>
        <position position="386"/>
    </location>
</feature>
<feature type="sequence variant" id="VAR_086706" description="Found in a patient with familial intrahepatic cholestasis; uncertain significance." evidence="10">
    <original>E</original>
    <variation>G</variation>
    <location>
        <position position="235"/>
    </location>
</feature>
<feature type="sequence variant" id="VAR_049902" description="In dbSNP:rs34259399." evidence="6 7">
    <original>S</original>
    <variation>N</variation>
    <location>
        <position position="363"/>
    </location>
</feature>
<feature type="sequence conflict" description="In Ref. 4; AAB51178." evidence="17" ref="4">
    <original>D</original>
    <variation>G</variation>
    <location>
        <position position="259"/>
    </location>
</feature>
<feature type="sequence conflict" description="In Ref. 4; AAB51178." evidence="17" ref="4">
    <original>L</original>
    <variation>R</variation>
    <location>
        <position position="308"/>
    </location>
</feature>
<feature type="sequence conflict" description="In Ref. 4; AAB51178." evidence="17" ref="4">
    <original>A</original>
    <variation>G</variation>
    <location>
        <position position="430"/>
    </location>
</feature>
<feature type="sequence conflict" description="In Ref. 2; BAC86714, 3; BAC11614 and 5; AAH04381." evidence="17" ref="2 3 5">
    <original>G</original>
    <variation>GR</variation>
    <location>
        <position position="518"/>
    </location>
</feature>
<feature type="sequence conflict" description="In Ref. 4; AAB51178." evidence="17" ref="4">
    <original>N</original>
    <variation>D</variation>
    <location>
        <position position="639"/>
    </location>
</feature>
<comment type="function">
    <text evidence="1 2">Probable role in the clearance of triglyceride-rich lipoprotein from blood. Binds chylomicrons, LDL and VLDL in presence of free fatty acids and allows their subsequent uptake in the cells (By similarity). Maintains epithelial barrier function by recruiting MARVELD2/tricellulin to tricellular tight junctions (By similarity).</text>
</comment>
<comment type="subunit">
    <text evidence="1 2">Homotrimer or homotetramer (By similarity). Assembles into cell-cell contacts. Interacts (via the cytoplasmic domain) with MARVELD2 (via C-terminal cytoplasmic domain); the interaction is required to recruit MARVELD2 to tricellular contacts. Interacts with OCLN (By similarity).</text>
</comment>
<comment type="subcellular location">
    <subcellularLocation>
        <location evidence="8">Cell membrane</location>
        <topology evidence="3">Single-pass type I membrane protein</topology>
    </subcellularLocation>
    <subcellularLocation>
        <location evidence="8 9">Cell junction</location>
        <location evidence="8 9">Tight junction</location>
    </subcellularLocation>
    <text evidence="8">Located at tricellular contacts.</text>
</comment>
<comment type="alternative products">
    <event type="alternative splicing"/>
    <isoform>
        <id>Q86X29-1</id>
        <name>1</name>
        <sequence type="displayed"/>
    </isoform>
    <isoform>
        <id>Q86X29-2</id>
        <name>2</name>
        <sequence type="described" ref="VSP_019691 VSP_019693"/>
    </isoform>
    <isoform>
        <id>Q86X29-3</id>
        <name>3</name>
        <sequence type="described" ref="VSP_019692 VSP_019694"/>
    </isoform>
    <isoform>
        <id>Q86X29-4</id>
        <name>4</name>
        <sequence type="described" ref="VSP_019692"/>
    </isoform>
    <isoform>
        <id>Q86X29-5</id>
        <name>5</name>
        <sequence type="described" ref="VSP_046797"/>
    </isoform>
    <isoform>
        <id>Q86X29-6</id>
        <name>6</name>
        <sequence type="described" ref="VSP_057210 VSP_057211"/>
    </isoform>
</comment>
<comment type="PTM">
    <text evidence="1">Phosphorylation at Ser-365 by MAPK8/JNK1 and MAPK9/JNK2 may be required for exclusive localization at tricellular tight junstions.</text>
</comment>
<comment type="PTM">
    <text evidence="11">Polyubiquitinated at Lys-638 via 'Lys-63'-linked ubiquitin chains; deubiquitinated by USP53.</text>
</comment>
<comment type="disease">
    <text evidence="10">Defects in LSR may be the cause of familial intrahepatic cholestasis.</text>
</comment>
<comment type="similarity">
    <text evidence="17">Belongs to the immunoglobulin superfamily. LISCH7 family.</text>
</comment>
<comment type="caution">
    <text evidence="17">In contrast to the rodent orthologous protein, it is longer in N-terminus and no signal sequence is detected by any prediction method.</text>
</comment>
<comment type="sequence caution" evidence="17">
    <conflict type="erroneous gene model prediction">
        <sequence resource="EMBL-CDS" id="AAB51178"/>
    </conflict>
</comment>
<comment type="sequence caution" evidence="17">
    <conflict type="erroneous gene model prediction">
        <sequence resource="EMBL-CDS" id="AAB58317"/>
    </conflict>
</comment>
<comment type="sequence caution" evidence="17">
    <conflict type="erroneous initiation">
        <sequence resource="EMBL-CDS" id="AAH04381"/>
    </conflict>
    <text>Extended N-terminus.</text>
</comment>
<accession>Q86X29</accession>
<accession>A6NDW3</accession>
<accession>B4DKL4</accession>
<accession>E9PHD4</accession>
<accession>O00112</accession>
<accession>O00426</accession>
<accession>Q6ZT80</accession>
<accession>Q8NBM0</accession>
<accession>Q9BT33</accession>
<accession>Q9UQL3</accession>
<proteinExistence type="evidence at protein level"/>
<evidence type="ECO:0000250" key="1">
    <source>
        <dbReference type="UniProtKB" id="Q99KG5"/>
    </source>
</evidence>
<evidence type="ECO:0000250" key="2">
    <source>
        <dbReference type="UniProtKB" id="Q9WU74"/>
    </source>
</evidence>
<evidence type="ECO:0000255" key="3"/>
<evidence type="ECO:0000255" key="4">
    <source>
        <dbReference type="PROSITE-ProRule" id="PRU00114"/>
    </source>
</evidence>
<evidence type="ECO:0000256" key="5">
    <source>
        <dbReference type="SAM" id="MobiDB-lite"/>
    </source>
</evidence>
<evidence type="ECO:0000269" key="6">
    <source>
    </source>
</evidence>
<evidence type="ECO:0000269" key="7">
    <source>
    </source>
</evidence>
<evidence type="ECO:0000269" key="8">
    <source>
    </source>
</evidence>
<evidence type="ECO:0000269" key="9">
    <source>
    </source>
</evidence>
<evidence type="ECO:0000269" key="10">
    <source>
    </source>
</evidence>
<evidence type="ECO:0000269" key="11">
    <source>
    </source>
</evidence>
<evidence type="ECO:0000303" key="12">
    <source>
    </source>
</evidence>
<evidence type="ECO:0000303" key="13">
    <source>
    </source>
</evidence>
<evidence type="ECO:0000303" key="14">
    <source>
    </source>
</evidence>
<evidence type="ECO:0000303" key="15">
    <source>
    </source>
</evidence>
<evidence type="ECO:0000303" key="16">
    <source ref="1"/>
</evidence>
<evidence type="ECO:0000305" key="17"/>
<evidence type="ECO:0000312" key="18">
    <source>
        <dbReference type="HGNC" id="HGNC:29572"/>
    </source>
</evidence>
<evidence type="ECO:0007744" key="19">
    <source>
    </source>
</evidence>
<evidence type="ECO:0007744" key="20">
    <source>
    </source>
</evidence>
<evidence type="ECO:0007744" key="21">
    <source>
    </source>
</evidence>
<evidence type="ECO:0007744" key="22">
    <source>
    </source>
</evidence>
<evidence type="ECO:0007744" key="23">
    <source>
    </source>
</evidence>
<evidence type="ECO:0007744" key="24">
    <source>
    </source>
</evidence>